<dbReference type="EMBL" id="U00096">
    <property type="protein sequence ID" value="AAC73879.1"/>
    <property type="molecule type" value="Genomic_DNA"/>
</dbReference>
<dbReference type="EMBL" id="AP009048">
    <property type="protein sequence ID" value="BAA35451.2"/>
    <property type="molecule type" value="Genomic_DNA"/>
</dbReference>
<dbReference type="PIR" id="H64815">
    <property type="entry name" value="H64815"/>
</dbReference>
<dbReference type="RefSeq" id="NP_415313.1">
    <property type="nucleotide sequence ID" value="NC_000913.3"/>
</dbReference>
<dbReference type="RefSeq" id="WP_000469031.1">
    <property type="nucleotide sequence ID" value="NZ_STEB01000019.1"/>
</dbReference>
<dbReference type="SMR" id="P0AFP9"/>
<dbReference type="BioGRID" id="4261834">
    <property type="interactions" value="21"/>
</dbReference>
<dbReference type="ComplexPortal" id="CPX-4443">
    <property type="entry name" value="Sodium/lithium ABC transporter complex"/>
</dbReference>
<dbReference type="DIP" id="DIP-48088N"/>
<dbReference type="FunCoup" id="P0AFP9">
    <property type="interactions" value="320"/>
</dbReference>
<dbReference type="IntAct" id="P0AFP9">
    <property type="interactions" value="1"/>
</dbReference>
<dbReference type="STRING" id="511145.b0792"/>
<dbReference type="TCDB" id="3.A.1.105.15">
    <property type="family name" value="the atp-binding cassette (abc) superfamily"/>
</dbReference>
<dbReference type="jPOST" id="P0AFP9"/>
<dbReference type="PaxDb" id="511145-b0792"/>
<dbReference type="DNASU" id="945403"/>
<dbReference type="EnsemblBacteria" id="AAC73879">
    <property type="protein sequence ID" value="AAC73879"/>
    <property type="gene ID" value="b0792"/>
</dbReference>
<dbReference type="GeneID" id="945403"/>
<dbReference type="KEGG" id="ecj:JW5803"/>
<dbReference type="KEGG" id="eco:b0792"/>
<dbReference type="KEGG" id="ecoc:C3026_05010"/>
<dbReference type="PATRIC" id="fig|1411691.4.peg.1486"/>
<dbReference type="EchoBASE" id="EB3438"/>
<dbReference type="eggNOG" id="COG0842">
    <property type="taxonomic scope" value="Bacteria"/>
</dbReference>
<dbReference type="HOGENOM" id="CLU_039483_8_3_6"/>
<dbReference type="InParanoid" id="P0AFP9"/>
<dbReference type="OMA" id="QAMFIAW"/>
<dbReference type="OrthoDB" id="9808686at2"/>
<dbReference type="PhylomeDB" id="P0AFP9"/>
<dbReference type="BioCyc" id="EcoCyc:YBHR-MONOMER"/>
<dbReference type="BioCyc" id="MetaCyc:YBHR-MONOMER"/>
<dbReference type="PRO" id="PR:P0AFP9"/>
<dbReference type="Proteomes" id="UP000000625">
    <property type="component" value="Chromosome"/>
</dbReference>
<dbReference type="GO" id="GO:0055052">
    <property type="term" value="C:ATP-binding cassette (ABC) transporter complex, substrate-binding subunit-containing"/>
    <property type="evidence" value="ECO:0000303"/>
    <property type="project" value="ComplexPortal"/>
</dbReference>
<dbReference type="GO" id="GO:0005886">
    <property type="term" value="C:plasma membrane"/>
    <property type="evidence" value="ECO:0000255"/>
    <property type="project" value="EcoCyc"/>
</dbReference>
<dbReference type="GO" id="GO:0140359">
    <property type="term" value="F:ABC-type transporter activity"/>
    <property type="evidence" value="ECO:0007669"/>
    <property type="project" value="InterPro"/>
</dbReference>
<dbReference type="GO" id="GO:0015562">
    <property type="term" value="F:efflux transmembrane transporter activity"/>
    <property type="evidence" value="ECO:0000316"/>
    <property type="project" value="EcoCyc"/>
</dbReference>
<dbReference type="GO" id="GO:0006974">
    <property type="term" value="P:DNA damage response"/>
    <property type="evidence" value="ECO:0000270"/>
    <property type="project" value="EcoliWiki"/>
</dbReference>
<dbReference type="GO" id="GO:0090452">
    <property type="term" value="P:lithium ion transmembrane transport"/>
    <property type="evidence" value="ECO:0000303"/>
    <property type="project" value="ComplexPortal"/>
</dbReference>
<dbReference type="GO" id="GO:0035725">
    <property type="term" value="P:sodium ion transmembrane transport"/>
    <property type="evidence" value="ECO:0000303"/>
    <property type="project" value="ComplexPortal"/>
</dbReference>
<dbReference type="GO" id="GO:0015904">
    <property type="term" value="P:tetracycline transmembrane transport"/>
    <property type="evidence" value="ECO:0000303"/>
    <property type="project" value="ComplexPortal"/>
</dbReference>
<dbReference type="GO" id="GO:1990961">
    <property type="term" value="P:xenobiotic detoxification by transmembrane export across the plasma membrane"/>
    <property type="evidence" value="ECO:0000316"/>
    <property type="project" value="EcoCyc"/>
</dbReference>
<dbReference type="GO" id="GO:0006855">
    <property type="term" value="P:xenobiotic transmembrane transport"/>
    <property type="evidence" value="ECO:0000303"/>
    <property type="project" value="ComplexPortal"/>
</dbReference>
<dbReference type="Gene3D" id="3.40.1710.10">
    <property type="entry name" value="abc type-2 transporter like domain"/>
    <property type="match status" value="1"/>
</dbReference>
<dbReference type="InterPro" id="IPR051449">
    <property type="entry name" value="ABC-2_transporter_component"/>
</dbReference>
<dbReference type="InterPro" id="IPR013525">
    <property type="entry name" value="ABC2_TM"/>
</dbReference>
<dbReference type="InterPro" id="IPR047817">
    <property type="entry name" value="ABC2_TM_bact-type"/>
</dbReference>
<dbReference type="InterPro" id="IPR000412">
    <property type="entry name" value="ABC_2_transport"/>
</dbReference>
<dbReference type="PANTHER" id="PTHR30294">
    <property type="entry name" value="MEMBRANE COMPONENT OF ABC TRANSPORTER YHHJ-RELATED"/>
    <property type="match status" value="1"/>
</dbReference>
<dbReference type="PANTHER" id="PTHR30294:SF44">
    <property type="entry name" value="MULTIDRUG ABC TRANSPORTER PERMEASE YBHR-RELATED"/>
    <property type="match status" value="1"/>
</dbReference>
<dbReference type="Pfam" id="PF12698">
    <property type="entry name" value="ABC2_membrane_3"/>
    <property type="match status" value="1"/>
</dbReference>
<dbReference type="PRINTS" id="PR00164">
    <property type="entry name" value="ABC2TRNSPORT"/>
</dbReference>
<dbReference type="PROSITE" id="PS51012">
    <property type="entry name" value="ABC_TM2"/>
    <property type="match status" value="1"/>
</dbReference>
<sequence length="368" mass="41566">MFHRLWTLIRKELQSLLREPQTRAILILPVLIQVILFPFAATLEVTNATIAIYDEDNGEHSVELTQRFARASAFTHVLLLKSPQEIRPTIDTQKALLLVRFPADFSRKLDTFQTAPLQLILDGRNSNSAQIAANYLQQIVKNYQQELLEGKPKPNNSELVVRNWYNPNLDYKWFVVPSLIAMITTIGVMIVTSLSVAREREQGTLDQLLVSPLTTWQIFIGKAVPALIVATFQATIVLAIGIWAYQIPFAGSLALFYFTMVIYGLSLVGFGLLISSLCSTQQQAFIGVFVFMMPAILLSGYVSPVENMPVWLQNLTWINPIRHFTDITKQIYLKDASLDIVWNSLWPLLVITATTGSAAYAMFRRKVM</sequence>
<evidence type="ECO:0000255" key="1"/>
<evidence type="ECO:0000255" key="2">
    <source>
        <dbReference type="PROSITE-ProRule" id="PRU00442"/>
    </source>
</evidence>
<evidence type="ECO:0000269" key="3">
    <source>
    </source>
</evidence>
<evidence type="ECO:0000269" key="4">
    <source>
    </source>
</evidence>
<evidence type="ECO:0000305" key="5"/>
<evidence type="ECO:0000305" key="6">
    <source>
    </source>
</evidence>
<feature type="chain" id="PRO_0000183002" description="Probable multidrug ABC transporter permease YbhR">
    <location>
        <begin position="1"/>
        <end position="368"/>
    </location>
</feature>
<feature type="topological domain" description="Cytoplasmic" evidence="5">
    <location>
        <begin position="1"/>
        <end position="24"/>
    </location>
</feature>
<feature type="transmembrane region" description="Helical" evidence="1">
    <location>
        <begin position="25"/>
        <end position="45"/>
    </location>
</feature>
<feature type="topological domain" description="Periplasmic" evidence="5">
    <location>
        <begin position="46"/>
        <end position="173"/>
    </location>
</feature>
<feature type="transmembrane region" description="Helical" evidence="1">
    <location>
        <begin position="174"/>
        <end position="194"/>
    </location>
</feature>
<feature type="topological domain" description="Cytoplasmic" evidence="5">
    <location>
        <begin position="195"/>
        <end position="222"/>
    </location>
</feature>
<feature type="transmembrane region" description="Helical" evidence="1">
    <location>
        <begin position="223"/>
        <end position="243"/>
    </location>
</feature>
<feature type="topological domain" description="Periplasmic" evidence="5">
    <location>
        <begin position="244"/>
        <end position="253"/>
    </location>
</feature>
<feature type="transmembrane region" description="Helical" evidence="1">
    <location>
        <begin position="254"/>
        <end position="274"/>
    </location>
</feature>
<feature type="topological domain" description="Cytoplasmic" evidence="5">
    <location>
        <begin position="275"/>
        <end position="284"/>
    </location>
</feature>
<feature type="transmembrane region" description="Helical" evidence="1">
    <location>
        <begin position="285"/>
        <end position="305"/>
    </location>
</feature>
<feature type="topological domain" description="Periplasmic" evidence="5">
    <location>
        <begin position="306"/>
        <end position="339"/>
    </location>
</feature>
<feature type="transmembrane region" description="Helical" evidence="1">
    <location>
        <begin position="340"/>
        <end position="360"/>
    </location>
</feature>
<feature type="topological domain" description="Cytoplasmic" evidence="3">
    <location>
        <begin position="361"/>
        <end position="368"/>
    </location>
</feature>
<feature type="domain" description="ABC transmembrane type-2" evidence="2">
    <location>
        <begin position="129"/>
        <end position="366"/>
    </location>
</feature>
<proteinExistence type="evidence at protein level"/>
<reference key="1">
    <citation type="journal article" date="1996" name="DNA Res.">
        <title>A 718-kb DNA sequence of the Escherichia coli K-12 genome corresponding to the 12.7-28.0 min region on the linkage map.</title>
        <authorList>
            <person name="Oshima T."/>
            <person name="Aiba H."/>
            <person name="Baba T."/>
            <person name="Fujita K."/>
            <person name="Hayashi K."/>
            <person name="Honjo A."/>
            <person name="Ikemoto K."/>
            <person name="Inada T."/>
            <person name="Itoh T."/>
            <person name="Kajihara M."/>
            <person name="Kanai K."/>
            <person name="Kashimoto K."/>
            <person name="Kimura S."/>
            <person name="Kitagawa M."/>
            <person name="Makino K."/>
            <person name="Masuda S."/>
            <person name="Miki T."/>
            <person name="Mizobuchi K."/>
            <person name="Mori H."/>
            <person name="Motomura K."/>
            <person name="Nakamura Y."/>
            <person name="Nashimoto H."/>
            <person name="Nishio Y."/>
            <person name="Saito N."/>
            <person name="Sampei G."/>
            <person name="Seki Y."/>
            <person name="Tagami H."/>
            <person name="Takemoto K."/>
            <person name="Wada C."/>
            <person name="Yamamoto Y."/>
            <person name="Yano M."/>
            <person name="Horiuchi T."/>
        </authorList>
    </citation>
    <scope>NUCLEOTIDE SEQUENCE [LARGE SCALE GENOMIC DNA]</scope>
    <source>
        <strain>K12 / W3110 / ATCC 27325 / DSM 5911</strain>
    </source>
</reference>
<reference key="2">
    <citation type="journal article" date="1997" name="Science">
        <title>The complete genome sequence of Escherichia coli K-12.</title>
        <authorList>
            <person name="Blattner F.R."/>
            <person name="Plunkett G. III"/>
            <person name="Bloch C.A."/>
            <person name="Perna N.T."/>
            <person name="Burland V."/>
            <person name="Riley M."/>
            <person name="Collado-Vides J."/>
            <person name="Glasner J.D."/>
            <person name="Rode C.K."/>
            <person name="Mayhew G.F."/>
            <person name="Gregor J."/>
            <person name="Davis N.W."/>
            <person name="Kirkpatrick H.A."/>
            <person name="Goeden M.A."/>
            <person name="Rose D.J."/>
            <person name="Mau B."/>
            <person name="Shao Y."/>
        </authorList>
    </citation>
    <scope>NUCLEOTIDE SEQUENCE [LARGE SCALE GENOMIC DNA]</scope>
    <source>
        <strain>K12 / MG1655 / ATCC 47076</strain>
    </source>
</reference>
<reference key="3">
    <citation type="journal article" date="2006" name="Mol. Syst. Biol.">
        <title>Highly accurate genome sequences of Escherichia coli K-12 strains MG1655 and W3110.</title>
        <authorList>
            <person name="Hayashi K."/>
            <person name="Morooka N."/>
            <person name="Yamamoto Y."/>
            <person name="Fujita K."/>
            <person name="Isono K."/>
            <person name="Choi S."/>
            <person name="Ohtsubo E."/>
            <person name="Baba T."/>
            <person name="Wanner B.L."/>
            <person name="Mori H."/>
            <person name="Horiuchi T."/>
        </authorList>
    </citation>
    <scope>NUCLEOTIDE SEQUENCE [LARGE SCALE GENOMIC DNA]</scope>
    <scope>SEQUENCE REVISION</scope>
    <source>
        <strain>K12 / W3110 / ATCC 27325 / DSM 5911</strain>
    </source>
</reference>
<reference key="4">
    <citation type="journal article" date="2005" name="Science">
        <title>Global topology analysis of the Escherichia coli inner membrane proteome.</title>
        <authorList>
            <person name="Daley D.O."/>
            <person name="Rapp M."/>
            <person name="Granseth E."/>
            <person name="Melen K."/>
            <person name="Drew D."/>
            <person name="von Heijne G."/>
        </authorList>
    </citation>
    <scope>TOPOLOGY [LARGE SCALE ANALYSIS]</scope>
    <scope>SUBCELLULAR LOCATION</scope>
    <source>
        <strain>K12 / MG1655 / ATCC 47076</strain>
    </source>
</reference>
<reference key="5">
    <citation type="journal article" date="2016" name="Microbiology">
        <title>Transcription factor CecR (YbiH) regulates a set of genes affecting the sensitivity of Escherichia coli against cefoperazone and chloramphenicol.</title>
        <authorList>
            <person name="Yamanaka Y."/>
            <person name="Shimada T."/>
            <person name="Yamamoto K."/>
            <person name="Ishihama A."/>
        </authorList>
    </citation>
    <scope>FUNCTION</scope>
    <scope>INDUCTION</scope>
    <source>
        <strain>K12 / W3110 / ATCC 27325 / DSM 5911</strain>
    </source>
</reference>
<comment type="function">
    <text evidence="6">Part of the ABC transporter complex YbhFSR that could be involved in efflux of cefoperazone. Probably involved in the translocation of the substrate across the membrane.</text>
</comment>
<comment type="subunit">
    <text evidence="5">The complex is probably composed of two ATP-binding proteins (YbhF) and two transmembrane proteins (YbhR and YbhS).</text>
</comment>
<comment type="subcellular location">
    <subcellularLocation>
        <location evidence="3">Cell inner membrane</location>
        <topology evidence="1">Multi-pass membrane protein</topology>
    </subcellularLocation>
</comment>
<comment type="induction">
    <text evidence="4">Repressed by the transcriptional regulator CecR.</text>
</comment>
<comment type="similarity">
    <text evidence="5">Belongs to the ABC-2 integral membrane protein family.</text>
</comment>
<keyword id="KW-0997">Cell inner membrane</keyword>
<keyword id="KW-1003">Cell membrane</keyword>
<keyword id="KW-0472">Membrane</keyword>
<keyword id="KW-1185">Reference proteome</keyword>
<keyword id="KW-0812">Transmembrane</keyword>
<keyword id="KW-1133">Transmembrane helix</keyword>
<keyword id="KW-0813">Transport</keyword>
<name>YBHR_ECOLI</name>
<gene>
    <name type="primary">ybhR</name>
    <name type="ordered locus">b0792</name>
    <name type="ordered locus">JW5803</name>
</gene>
<protein>
    <recommendedName>
        <fullName evidence="5">Probable multidrug ABC transporter permease YbhR</fullName>
    </recommendedName>
</protein>
<organism>
    <name type="scientific">Escherichia coli (strain K12)</name>
    <dbReference type="NCBI Taxonomy" id="83333"/>
    <lineage>
        <taxon>Bacteria</taxon>
        <taxon>Pseudomonadati</taxon>
        <taxon>Pseudomonadota</taxon>
        <taxon>Gammaproteobacteria</taxon>
        <taxon>Enterobacterales</taxon>
        <taxon>Enterobacteriaceae</taxon>
        <taxon>Escherichia</taxon>
    </lineage>
</organism>
<accession>P0AFP9</accession>
<accession>P75774</accession>
<accession>Q9ZBC6</accession>